<comment type="function">
    <text evidence="1">DNA-dependent RNA polymerase catalyzes the transcription of DNA into RNA using the four ribonucleoside triphosphates as substrates.</text>
</comment>
<comment type="catalytic activity">
    <reaction evidence="1">
        <text>RNA(n) + a ribonucleoside 5'-triphosphate = RNA(n+1) + diphosphate</text>
        <dbReference type="Rhea" id="RHEA:21248"/>
        <dbReference type="Rhea" id="RHEA-COMP:14527"/>
        <dbReference type="Rhea" id="RHEA-COMP:17342"/>
        <dbReference type="ChEBI" id="CHEBI:33019"/>
        <dbReference type="ChEBI" id="CHEBI:61557"/>
        <dbReference type="ChEBI" id="CHEBI:140395"/>
        <dbReference type="EC" id="2.7.7.6"/>
    </reaction>
</comment>
<comment type="subunit">
    <text evidence="1">Homodimer. The RNAP catalytic core consists of 2 alpha, 1 beta, 1 beta' and 1 omega subunit. When a sigma factor is associated with the core the holoenzyme is formed, which can initiate transcription.</text>
</comment>
<comment type="domain">
    <text evidence="1">The N-terminal domain is essential for RNAP assembly and basal transcription, whereas the C-terminal domain is involved in interaction with transcriptional regulators and with upstream promoter elements.</text>
</comment>
<comment type="similarity">
    <text evidence="1">Belongs to the RNA polymerase alpha chain family.</text>
</comment>
<comment type="sequence caution" evidence="2">
    <conflict type="erroneous initiation">
        <sequence resource="EMBL-CDS" id="BAF39128"/>
    </conflict>
</comment>
<gene>
    <name evidence="1" type="primary">rpoA</name>
    <name type="ordered locus">BAD_0347</name>
</gene>
<evidence type="ECO:0000255" key="1">
    <source>
        <dbReference type="HAMAP-Rule" id="MF_00059"/>
    </source>
</evidence>
<evidence type="ECO:0000305" key="2"/>
<protein>
    <recommendedName>
        <fullName evidence="1">DNA-directed RNA polymerase subunit alpha</fullName>
        <shortName evidence="1">RNAP subunit alpha</shortName>
        <ecNumber evidence="1">2.7.7.6</ecNumber>
    </recommendedName>
    <alternativeName>
        <fullName evidence="1">RNA polymerase subunit alpha</fullName>
    </alternativeName>
    <alternativeName>
        <fullName evidence="1">Transcriptase subunit alpha</fullName>
    </alternativeName>
</protein>
<reference key="1">
    <citation type="submission" date="2006-12" db="EMBL/GenBank/DDBJ databases">
        <title>Bifidobacterium adolescentis complete genome sequence.</title>
        <authorList>
            <person name="Suzuki T."/>
            <person name="Tsuda Y."/>
            <person name="Kanou N."/>
            <person name="Inoue T."/>
            <person name="Kumazaki K."/>
            <person name="Nagano S."/>
            <person name="Hirai S."/>
            <person name="Tanaka K."/>
            <person name="Watanabe K."/>
        </authorList>
    </citation>
    <scope>NUCLEOTIDE SEQUENCE [LARGE SCALE GENOMIC DNA]</scope>
    <source>
        <strain>ATCC 15703 / DSM 20083 / NCTC 11814 / E194a</strain>
    </source>
</reference>
<accession>A1A095</accession>
<name>RPOA_BIFAA</name>
<proteinExistence type="inferred from homology"/>
<dbReference type="EC" id="2.7.7.6" evidence="1"/>
<dbReference type="EMBL" id="AP009256">
    <property type="protein sequence ID" value="BAF39128.1"/>
    <property type="status" value="ALT_INIT"/>
    <property type="molecule type" value="Genomic_DNA"/>
</dbReference>
<dbReference type="RefSeq" id="WP_021913098.1">
    <property type="nucleotide sequence ID" value="NC_008618.1"/>
</dbReference>
<dbReference type="SMR" id="A1A095"/>
<dbReference type="STRING" id="367928.BAD_0347"/>
<dbReference type="PaxDb" id="1680-BADO_0354"/>
<dbReference type="GeneID" id="4556642"/>
<dbReference type="KEGG" id="bad:BAD_0347"/>
<dbReference type="HOGENOM" id="CLU_053084_0_1_11"/>
<dbReference type="Proteomes" id="UP000008702">
    <property type="component" value="Chromosome"/>
</dbReference>
<dbReference type="GO" id="GO:0005737">
    <property type="term" value="C:cytoplasm"/>
    <property type="evidence" value="ECO:0007669"/>
    <property type="project" value="UniProtKB-ARBA"/>
</dbReference>
<dbReference type="GO" id="GO:0000428">
    <property type="term" value="C:DNA-directed RNA polymerase complex"/>
    <property type="evidence" value="ECO:0007669"/>
    <property type="project" value="UniProtKB-KW"/>
</dbReference>
<dbReference type="GO" id="GO:0003677">
    <property type="term" value="F:DNA binding"/>
    <property type="evidence" value="ECO:0007669"/>
    <property type="project" value="UniProtKB-UniRule"/>
</dbReference>
<dbReference type="GO" id="GO:0003899">
    <property type="term" value="F:DNA-directed RNA polymerase activity"/>
    <property type="evidence" value="ECO:0007669"/>
    <property type="project" value="UniProtKB-UniRule"/>
</dbReference>
<dbReference type="GO" id="GO:0046983">
    <property type="term" value="F:protein dimerization activity"/>
    <property type="evidence" value="ECO:0007669"/>
    <property type="project" value="InterPro"/>
</dbReference>
<dbReference type="GO" id="GO:0006351">
    <property type="term" value="P:DNA-templated transcription"/>
    <property type="evidence" value="ECO:0007669"/>
    <property type="project" value="UniProtKB-UniRule"/>
</dbReference>
<dbReference type="CDD" id="cd06928">
    <property type="entry name" value="RNAP_alpha_NTD"/>
    <property type="match status" value="1"/>
</dbReference>
<dbReference type="FunFam" id="1.10.150.20:FF:000001">
    <property type="entry name" value="DNA-directed RNA polymerase subunit alpha"/>
    <property type="match status" value="1"/>
</dbReference>
<dbReference type="FunFam" id="2.170.120.12:FF:000001">
    <property type="entry name" value="DNA-directed RNA polymerase subunit alpha"/>
    <property type="match status" value="1"/>
</dbReference>
<dbReference type="Gene3D" id="1.10.150.20">
    <property type="entry name" value="5' to 3' exonuclease, C-terminal subdomain"/>
    <property type="match status" value="1"/>
</dbReference>
<dbReference type="Gene3D" id="2.170.120.12">
    <property type="entry name" value="DNA-directed RNA polymerase, insert domain"/>
    <property type="match status" value="1"/>
</dbReference>
<dbReference type="Gene3D" id="3.30.1360.10">
    <property type="entry name" value="RNA polymerase, RBP11-like subunit"/>
    <property type="match status" value="1"/>
</dbReference>
<dbReference type="HAMAP" id="MF_00059">
    <property type="entry name" value="RNApol_bact_RpoA"/>
    <property type="match status" value="1"/>
</dbReference>
<dbReference type="InterPro" id="IPR011262">
    <property type="entry name" value="DNA-dir_RNA_pol_insert"/>
</dbReference>
<dbReference type="InterPro" id="IPR011263">
    <property type="entry name" value="DNA-dir_RNA_pol_RpoA/D/Rpb3"/>
</dbReference>
<dbReference type="InterPro" id="IPR011773">
    <property type="entry name" value="DNA-dir_RpoA"/>
</dbReference>
<dbReference type="InterPro" id="IPR036603">
    <property type="entry name" value="RBP11-like"/>
</dbReference>
<dbReference type="InterPro" id="IPR011260">
    <property type="entry name" value="RNAP_asu_C"/>
</dbReference>
<dbReference type="InterPro" id="IPR036643">
    <property type="entry name" value="RNApol_insert_sf"/>
</dbReference>
<dbReference type="NCBIfam" id="NF003513">
    <property type="entry name" value="PRK05182.1-2"/>
    <property type="match status" value="1"/>
</dbReference>
<dbReference type="NCBIfam" id="NF003514">
    <property type="entry name" value="PRK05182.1-4"/>
    <property type="match status" value="1"/>
</dbReference>
<dbReference type="NCBIfam" id="NF003519">
    <property type="entry name" value="PRK05182.2-5"/>
    <property type="match status" value="1"/>
</dbReference>
<dbReference type="NCBIfam" id="TIGR02027">
    <property type="entry name" value="rpoA"/>
    <property type="match status" value="1"/>
</dbReference>
<dbReference type="Pfam" id="PF01000">
    <property type="entry name" value="RNA_pol_A_bac"/>
    <property type="match status" value="1"/>
</dbReference>
<dbReference type="Pfam" id="PF03118">
    <property type="entry name" value="RNA_pol_A_CTD"/>
    <property type="match status" value="1"/>
</dbReference>
<dbReference type="Pfam" id="PF01193">
    <property type="entry name" value="RNA_pol_L"/>
    <property type="match status" value="1"/>
</dbReference>
<dbReference type="SMART" id="SM00662">
    <property type="entry name" value="RPOLD"/>
    <property type="match status" value="1"/>
</dbReference>
<dbReference type="SUPFAM" id="SSF47789">
    <property type="entry name" value="C-terminal domain of RNA polymerase alpha subunit"/>
    <property type="match status" value="1"/>
</dbReference>
<dbReference type="SUPFAM" id="SSF56553">
    <property type="entry name" value="Insert subdomain of RNA polymerase alpha subunit"/>
    <property type="match status" value="1"/>
</dbReference>
<dbReference type="SUPFAM" id="SSF55257">
    <property type="entry name" value="RBP11-like subunits of RNA polymerase"/>
    <property type="match status" value="1"/>
</dbReference>
<sequence>MLIAQRPTLTEESLNPQRSRFTIEPLEPGFGYTLGNSLRRTLLSSIPGAAVTSVRISGVPHEFTTLPGVEEDVTEILLNIKGIVLTSEYDEPVVMYLRKSGKGEATAGDITPPAGVTIANPDMHIATLAEDGELEIEFTVERGRGYVPAQMNKQDNAEIGRIPVDSIYSPVLKVSYRVEATRVEQRTDFDKLILDVETKPAISPRDAVASAGSTLVELFGLCRELNTQAEGVEVGPAPVAEETNPEMNIPIEDLNLTQRSYNCLKREGIHTIGELVAHTEQDLLDIRNFGMKSIDEVKEKLQSLGLALKASPLGNFDANNLEGGTFFSPEDE</sequence>
<keyword id="KW-0240">DNA-directed RNA polymerase</keyword>
<keyword id="KW-0548">Nucleotidyltransferase</keyword>
<keyword id="KW-1185">Reference proteome</keyword>
<keyword id="KW-0804">Transcription</keyword>
<keyword id="KW-0808">Transferase</keyword>
<organism>
    <name type="scientific">Bifidobacterium adolescentis (strain ATCC 15703 / DSM 20083 / NCTC 11814 / E194a)</name>
    <dbReference type="NCBI Taxonomy" id="367928"/>
    <lineage>
        <taxon>Bacteria</taxon>
        <taxon>Bacillati</taxon>
        <taxon>Actinomycetota</taxon>
        <taxon>Actinomycetes</taxon>
        <taxon>Bifidobacteriales</taxon>
        <taxon>Bifidobacteriaceae</taxon>
        <taxon>Bifidobacterium</taxon>
    </lineage>
</organism>
<feature type="chain" id="PRO_0000296784" description="DNA-directed RNA polymerase subunit alpha">
    <location>
        <begin position="1"/>
        <end position="332"/>
    </location>
</feature>
<feature type="region of interest" description="Alpha N-terminal domain (alpha-NTD)" evidence="1">
    <location>
        <begin position="1"/>
        <end position="226"/>
    </location>
</feature>
<feature type="region of interest" description="Alpha C-terminal domain (alpha-CTD)" evidence="1">
    <location>
        <begin position="245"/>
        <end position="332"/>
    </location>
</feature>